<evidence type="ECO:0000250" key="1"/>
<evidence type="ECO:0000305" key="2"/>
<feature type="chain" id="PRO_0000224828" description="Putative TrmH family tRNA/rRNA methyltransferase">
    <location>
        <begin position="1"/>
        <end position="248"/>
    </location>
</feature>
<feature type="binding site" evidence="1">
    <location>
        <position position="196"/>
    </location>
    <ligand>
        <name>S-adenosyl-L-methionine</name>
        <dbReference type="ChEBI" id="CHEBI:59789"/>
    </ligand>
</feature>
<feature type="binding site" evidence="1">
    <location>
        <position position="216"/>
    </location>
    <ligand>
        <name>S-adenosyl-L-methionine</name>
        <dbReference type="ChEBI" id="CHEBI:59789"/>
    </ligand>
</feature>
<feature type="binding site" evidence="1">
    <location>
        <position position="225"/>
    </location>
    <ligand>
        <name>S-adenosyl-L-methionine</name>
        <dbReference type="ChEBI" id="CHEBI:59789"/>
    </ligand>
</feature>
<accession>Q99W72</accession>
<comment type="similarity">
    <text evidence="2">Belongs to the class IV-like SAM-binding methyltransferase superfamily. RNA methyltransferase TrmH family.</text>
</comment>
<sequence length="248" mass="27181">MEDTVIVGRHAVREAIITGHPINKILIQEGIKKQQINEILKNAKDQKIIVQTVPKSKLDFLANAPHQGVAALIAPYEYADFDQFLKQQKEKEGLSTVLILDGLEDPHNLGSILRTADATGVDGVIIPKRRSVTLTQTVAKASTGAIEHVPVIRVTNLAKTIDELKDNGFWVAGTEANNATDYRNLEADMSLAIVIGSEGQGMSRLVSDKCDFYIKIPMVGHVNSLNASVAASLMMYEVFRKRHDVGEI</sequence>
<organism>
    <name type="scientific">Staphylococcus aureus (strain Mu50 / ATCC 700699)</name>
    <dbReference type="NCBI Taxonomy" id="158878"/>
    <lineage>
        <taxon>Bacteria</taxon>
        <taxon>Bacillati</taxon>
        <taxon>Bacillota</taxon>
        <taxon>Bacilli</taxon>
        <taxon>Bacillales</taxon>
        <taxon>Staphylococcaceae</taxon>
        <taxon>Staphylococcus</taxon>
    </lineage>
</organism>
<proteinExistence type="inferred from homology"/>
<dbReference type="EC" id="2.1.1.-"/>
<dbReference type="EMBL" id="BA000017">
    <property type="protein sequence ID" value="BAB56693.1"/>
    <property type="molecule type" value="Genomic_DNA"/>
</dbReference>
<dbReference type="SMR" id="Q99W72"/>
<dbReference type="KEGG" id="sav:SAV0531"/>
<dbReference type="HOGENOM" id="CLU_021322_0_1_9"/>
<dbReference type="PhylomeDB" id="Q99W72"/>
<dbReference type="Proteomes" id="UP000002481">
    <property type="component" value="Chromosome"/>
</dbReference>
<dbReference type="GO" id="GO:0005829">
    <property type="term" value="C:cytosol"/>
    <property type="evidence" value="ECO:0007669"/>
    <property type="project" value="TreeGrafter"/>
</dbReference>
<dbReference type="GO" id="GO:0003723">
    <property type="term" value="F:RNA binding"/>
    <property type="evidence" value="ECO:0007669"/>
    <property type="project" value="InterPro"/>
</dbReference>
<dbReference type="GO" id="GO:0008173">
    <property type="term" value="F:RNA methyltransferase activity"/>
    <property type="evidence" value="ECO:0007669"/>
    <property type="project" value="InterPro"/>
</dbReference>
<dbReference type="GO" id="GO:0032259">
    <property type="term" value="P:methylation"/>
    <property type="evidence" value="ECO:0007669"/>
    <property type="project" value="UniProtKB-KW"/>
</dbReference>
<dbReference type="GO" id="GO:0006396">
    <property type="term" value="P:RNA processing"/>
    <property type="evidence" value="ECO:0007669"/>
    <property type="project" value="InterPro"/>
</dbReference>
<dbReference type="CDD" id="cd18103">
    <property type="entry name" value="SpoU-like_RlmB"/>
    <property type="match status" value="1"/>
</dbReference>
<dbReference type="FunFam" id="3.40.1280.10:FF:000008">
    <property type="entry name" value="Group 3 RNA methyltransferase TrmH"/>
    <property type="match status" value="1"/>
</dbReference>
<dbReference type="Gene3D" id="3.30.1330.30">
    <property type="match status" value="1"/>
</dbReference>
<dbReference type="Gene3D" id="3.40.1280.10">
    <property type="match status" value="1"/>
</dbReference>
<dbReference type="InterPro" id="IPR029028">
    <property type="entry name" value="Alpha/beta_knot_MTases"/>
</dbReference>
<dbReference type="InterPro" id="IPR029064">
    <property type="entry name" value="Ribosomal_eL30-like_sf"/>
</dbReference>
<dbReference type="InterPro" id="IPR004441">
    <property type="entry name" value="rRNA_MeTrfase_TrmH"/>
</dbReference>
<dbReference type="InterPro" id="IPR001537">
    <property type="entry name" value="SpoU_MeTrfase"/>
</dbReference>
<dbReference type="InterPro" id="IPR013123">
    <property type="entry name" value="SpoU_subst-bd"/>
</dbReference>
<dbReference type="InterPro" id="IPR029026">
    <property type="entry name" value="tRNA_m1G_MTases_N"/>
</dbReference>
<dbReference type="NCBIfam" id="TIGR00186">
    <property type="entry name" value="rRNA_methyl_3"/>
    <property type="match status" value="1"/>
</dbReference>
<dbReference type="PANTHER" id="PTHR46429">
    <property type="entry name" value="23S RRNA (GUANOSINE-2'-O-)-METHYLTRANSFERASE RLMB"/>
    <property type="match status" value="1"/>
</dbReference>
<dbReference type="PANTHER" id="PTHR46429:SF1">
    <property type="entry name" value="23S RRNA (GUANOSINE-2'-O-)-METHYLTRANSFERASE RLMB"/>
    <property type="match status" value="1"/>
</dbReference>
<dbReference type="Pfam" id="PF00588">
    <property type="entry name" value="SpoU_methylase"/>
    <property type="match status" value="1"/>
</dbReference>
<dbReference type="Pfam" id="PF08032">
    <property type="entry name" value="SpoU_sub_bind"/>
    <property type="match status" value="1"/>
</dbReference>
<dbReference type="SMART" id="SM00967">
    <property type="entry name" value="SpoU_sub_bind"/>
    <property type="match status" value="1"/>
</dbReference>
<dbReference type="SUPFAM" id="SSF75217">
    <property type="entry name" value="alpha/beta knot"/>
    <property type="match status" value="1"/>
</dbReference>
<dbReference type="SUPFAM" id="SSF55315">
    <property type="entry name" value="L30e-like"/>
    <property type="match status" value="1"/>
</dbReference>
<reference key="1">
    <citation type="journal article" date="2001" name="Lancet">
        <title>Whole genome sequencing of meticillin-resistant Staphylococcus aureus.</title>
        <authorList>
            <person name="Kuroda M."/>
            <person name="Ohta T."/>
            <person name="Uchiyama I."/>
            <person name="Baba T."/>
            <person name="Yuzawa H."/>
            <person name="Kobayashi I."/>
            <person name="Cui L."/>
            <person name="Oguchi A."/>
            <person name="Aoki K."/>
            <person name="Nagai Y."/>
            <person name="Lian J.-Q."/>
            <person name="Ito T."/>
            <person name="Kanamori M."/>
            <person name="Matsumaru H."/>
            <person name="Maruyama A."/>
            <person name="Murakami H."/>
            <person name="Hosoyama A."/>
            <person name="Mizutani-Ui Y."/>
            <person name="Takahashi N.K."/>
            <person name="Sawano T."/>
            <person name="Inoue R."/>
            <person name="Kaito C."/>
            <person name="Sekimizu K."/>
            <person name="Hirakawa H."/>
            <person name="Kuhara S."/>
            <person name="Goto S."/>
            <person name="Yabuzaki J."/>
            <person name="Kanehisa M."/>
            <person name="Yamashita A."/>
            <person name="Oshima K."/>
            <person name="Furuya K."/>
            <person name="Yoshino C."/>
            <person name="Shiba T."/>
            <person name="Hattori M."/>
            <person name="Ogasawara N."/>
            <person name="Hayashi H."/>
            <person name="Hiramatsu K."/>
        </authorList>
    </citation>
    <scope>NUCLEOTIDE SEQUENCE [LARGE SCALE GENOMIC DNA]</scope>
    <source>
        <strain>Mu50 / ATCC 700699</strain>
    </source>
</reference>
<protein>
    <recommendedName>
        <fullName>Putative TrmH family tRNA/rRNA methyltransferase</fullName>
        <ecNumber>2.1.1.-</ecNumber>
    </recommendedName>
</protein>
<name>TRMHL_STAAM</name>
<keyword id="KW-0489">Methyltransferase</keyword>
<keyword id="KW-0808">Transferase</keyword>
<gene>
    <name type="ordered locus">SAV0531</name>
</gene>